<evidence type="ECO:0000255" key="1">
    <source>
        <dbReference type="HAMAP-Rule" id="MF_00258"/>
    </source>
</evidence>
<name>MURI_GLOC7</name>
<proteinExistence type="inferred from homology"/>
<gene>
    <name evidence="1" type="primary">murI</name>
    <name type="ordered locus">PCC7424_1797</name>
</gene>
<sequence>MRQCQRSPIGIFDSGVGGLTVLRELYRRLPNESILYFADTARLPYGTRSAGEILQFVREIMDWMTSQQVKMVIMACNTSSALALEAIRDEFALPVLGVILPGARAAVQKGKRIGVIATPATAASNAYRQAIEEIDSTAQVWQVGCPDFVPLIEQNRLYEPYTKEVAKQYLNPLLQVNIDTLVYGCTHYRHLEPLFRQILPPSISLVDPAQYVVSAAEKELELLGLKSTLPCLPTRFCVSGNPETFANLSRQWLGYIPRVDKVYLPVKIRSSMSLEVLE</sequence>
<organism>
    <name type="scientific">Gloeothece citriformis (strain PCC 7424)</name>
    <name type="common">Cyanothece sp. (strain PCC 7424)</name>
    <dbReference type="NCBI Taxonomy" id="65393"/>
    <lineage>
        <taxon>Bacteria</taxon>
        <taxon>Bacillati</taxon>
        <taxon>Cyanobacteriota</taxon>
        <taxon>Cyanophyceae</taxon>
        <taxon>Oscillatoriophycideae</taxon>
        <taxon>Chroococcales</taxon>
        <taxon>Aphanothecaceae</taxon>
        <taxon>Gloeothece</taxon>
        <taxon>Gloeothece citriformis</taxon>
    </lineage>
</organism>
<keyword id="KW-0133">Cell shape</keyword>
<keyword id="KW-0961">Cell wall biogenesis/degradation</keyword>
<keyword id="KW-0413">Isomerase</keyword>
<keyword id="KW-0573">Peptidoglycan synthesis</keyword>
<keyword id="KW-1185">Reference proteome</keyword>
<protein>
    <recommendedName>
        <fullName evidence="1">Glutamate racemase</fullName>
        <ecNumber evidence="1">5.1.1.3</ecNumber>
    </recommendedName>
</protein>
<comment type="function">
    <text evidence="1">Provides the (R)-glutamate required for cell wall biosynthesis.</text>
</comment>
<comment type="catalytic activity">
    <reaction evidence="1">
        <text>L-glutamate = D-glutamate</text>
        <dbReference type="Rhea" id="RHEA:12813"/>
        <dbReference type="ChEBI" id="CHEBI:29985"/>
        <dbReference type="ChEBI" id="CHEBI:29986"/>
        <dbReference type="EC" id="5.1.1.3"/>
    </reaction>
</comment>
<comment type="pathway">
    <text evidence="1">Cell wall biogenesis; peptidoglycan biosynthesis.</text>
</comment>
<comment type="similarity">
    <text evidence="1">Belongs to the aspartate/glutamate racemases family.</text>
</comment>
<reference key="1">
    <citation type="journal article" date="2011" name="MBio">
        <title>Novel metabolic attributes of the genus Cyanothece, comprising a group of unicellular nitrogen-fixing Cyanobacteria.</title>
        <authorList>
            <person name="Bandyopadhyay A."/>
            <person name="Elvitigala T."/>
            <person name="Welsh E."/>
            <person name="Stockel J."/>
            <person name="Liberton M."/>
            <person name="Min H."/>
            <person name="Sherman L.A."/>
            <person name="Pakrasi H.B."/>
        </authorList>
    </citation>
    <scope>NUCLEOTIDE SEQUENCE [LARGE SCALE GENOMIC DNA]</scope>
    <source>
        <strain>PCC 7424</strain>
    </source>
</reference>
<feature type="chain" id="PRO_1000119183" description="Glutamate racemase">
    <location>
        <begin position="1"/>
        <end position="278"/>
    </location>
</feature>
<feature type="active site" description="Proton donor/acceptor" evidence="1">
    <location>
        <position position="76"/>
    </location>
</feature>
<feature type="active site" description="Proton donor/acceptor" evidence="1">
    <location>
        <position position="185"/>
    </location>
</feature>
<feature type="binding site" evidence="1">
    <location>
        <begin position="13"/>
        <end position="14"/>
    </location>
    <ligand>
        <name>substrate</name>
    </ligand>
</feature>
<feature type="binding site" evidence="1">
    <location>
        <begin position="45"/>
        <end position="46"/>
    </location>
    <ligand>
        <name>substrate</name>
    </ligand>
</feature>
<feature type="binding site" evidence="1">
    <location>
        <begin position="77"/>
        <end position="78"/>
    </location>
    <ligand>
        <name>substrate</name>
    </ligand>
</feature>
<feature type="binding site" evidence="1">
    <location>
        <begin position="186"/>
        <end position="187"/>
    </location>
    <ligand>
        <name>substrate</name>
    </ligand>
</feature>
<accession>B7KCC4</accession>
<dbReference type="EC" id="5.1.1.3" evidence="1"/>
<dbReference type="EMBL" id="CP001291">
    <property type="protein sequence ID" value="ACK70229.1"/>
    <property type="molecule type" value="Genomic_DNA"/>
</dbReference>
<dbReference type="RefSeq" id="WP_012599172.1">
    <property type="nucleotide sequence ID" value="NC_011729.1"/>
</dbReference>
<dbReference type="SMR" id="B7KCC4"/>
<dbReference type="STRING" id="65393.PCC7424_1797"/>
<dbReference type="KEGG" id="cyc:PCC7424_1797"/>
<dbReference type="eggNOG" id="COG0796">
    <property type="taxonomic scope" value="Bacteria"/>
</dbReference>
<dbReference type="HOGENOM" id="CLU_052344_0_2_3"/>
<dbReference type="OrthoDB" id="9801055at2"/>
<dbReference type="UniPathway" id="UPA00219"/>
<dbReference type="Proteomes" id="UP000002384">
    <property type="component" value="Chromosome"/>
</dbReference>
<dbReference type="GO" id="GO:0008881">
    <property type="term" value="F:glutamate racemase activity"/>
    <property type="evidence" value="ECO:0007669"/>
    <property type="project" value="UniProtKB-UniRule"/>
</dbReference>
<dbReference type="GO" id="GO:0071555">
    <property type="term" value="P:cell wall organization"/>
    <property type="evidence" value="ECO:0007669"/>
    <property type="project" value="UniProtKB-KW"/>
</dbReference>
<dbReference type="GO" id="GO:0009252">
    <property type="term" value="P:peptidoglycan biosynthetic process"/>
    <property type="evidence" value="ECO:0007669"/>
    <property type="project" value="UniProtKB-UniRule"/>
</dbReference>
<dbReference type="GO" id="GO:0008360">
    <property type="term" value="P:regulation of cell shape"/>
    <property type="evidence" value="ECO:0007669"/>
    <property type="project" value="UniProtKB-KW"/>
</dbReference>
<dbReference type="FunFam" id="3.40.50.1860:FF:000002">
    <property type="entry name" value="Glutamate racemase"/>
    <property type="match status" value="1"/>
</dbReference>
<dbReference type="Gene3D" id="3.40.50.1860">
    <property type="match status" value="2"/>
</dbReference>
<dbReference type="HAMAP" id="MF_00258">
    <property type="entry name" value="Glu_racemase"/>
    <property type="match status" value="1"/>
</dbReference>
<dbReference type="InterPro" id="IPR015942">
    <property type="entry name" value="Asp/Glu/hydantoin_racemase"/>
</dbReference>
<dbReference type="InterPro" id="IPR001920">
    <property type="entry name" value="Asp/Glu_race"/>
</dbReference>
<dbReference type="InterPro" id="IPR018187">
    <property type="entry name" value="Asp/Glu_racemase_AS_1"/>
</dbReference>
<dbReference type="InterPro" id="IPR033134">
    <property type="entry name" value="Asp/Glu_racemase_AS_2"/>
</dbReference>
<dbReference type="InterPro" id="IPR004391">
    <property type="entry name" value="Glu_race"/>
</dbReference>
<dbReference type="NCBIfam" id="TIGR00067">
    <property type="entry name" value="glut_race"/>
    <property type="match status" value="1"/>
</dbReference>
<dbReference type="PANTHER" id="PTHR21198">
    <property type="entry name" value="GLUTAMATE RACEMASE"/>
    <property type="match status" value="1"/>
</dbReference>
<dbReference type="PANTHER" id="PTHR21198:SF2">
    <property type="entry name" value="GLUTAMATE RACEMASE"/>
    <property type="match status" value="1"/>
</dbReference>
<dbReference type="Pfam" id="PF01177">
    <property type="entry name" value="Asp_Glu_race"/>
    <property type="match status" value="1"/>
</dbReference>
<dbReference type="SUPFAM" id="SSF53681">
    <property type="entry name" value="Aspartate/glutamate racemase"/>
    <property type="match status" value="2"/>
</dbReference>
<dbReference type="PROSITE" id="PS00923">
    <property type="entry name" value="ASP_GLU_RACEMASE_1"/>
    <property type="match status" value="1"/>
</dbReference>
<dbReference type="PROSITE" id="PS00924">
    <property type="entry name" value="ASP_GLU_RACEMASE_2"/>
    <property type="match status" value="1"/>
</dbReference>